<proteinExistence type="inferred from homology"/>
<organism>
    <name type="scientific">Bacillus thuringiensis (strain Al Hakam)</name>
    <dbReference type="NCBI Taxonomy" id="412694"/>
    <lineage>
        <taxon>Bacteria</taxon>
        <taxon>Bacillati</taxon>
        <taxon>Bacillota</taxon>
        <taxon>Bacilli</taxon>
        <taxon>Bacillales</taxon>
        <taxon>Bacillaceae</taxon>
        <taxon>Bacillus</taxon>
        <taxon>Bacillus cereus group</taxon>
    </lineage>
</organism>
<evidence type="ECO:0000255" key="1">
    <source>
        <dbReference type="HAMAP-Rule" id="MF_00558"/>
    </source>
</evidence>
<accession>A0RHK9</accession>
<name>SUCC_BACAH</name>
<protein>
    <recommendedName>
        <fullName evidence="1">Succinate--CoA ligase [ADP-forming] subunit beta</fullName>
        <ecNumber evidence="1">6.2.1.5</ecNumber>
    </recommendedName>
    <alternativeName>
        <fullName evidence="1">Succinyl-CoA synthetase subunit beta</fullName>
        <shortName evidence="1">SCS-beta</shortName>
    </alternativeName>
</protein>
<keyword id="KW-0067">ATP-binding</keyword>
<keyword id="KW-0436">Ligase</keyword>
<keyword id="KW-0460">Magnesium</keyword>
<keyword id="KW-0479">Metal-binding</keyword>
<keyword id="KW-0547">Nucleotide-binding</keyword>
<keyword id="KW-0816">Tricarboxylic acid cycle</keyword>
<sequence>MNIHEYQGKAVLRSYGVSVPNGKVAFTVEEAVEAAKELGTDVCVVKAQIHAGGRGKAGGVKVAKNLDEVRTYAESILGTTLVTHQTGPEGKEVKRLLIEEGCDIKKEYYVGLVLDRATSQVVLMASEEGGTEIEEVAEKTPEKIFKEYIDPAVGLQGFQARRIAFNINIPKELVGQAVKFMMGLYRAFIEKDCSIAEINPLVTTGDGKVMALDAKLNFDSNALYRHKDILELRDLDEEDAKEIEASKYDLNYIPLDGNIGCMVNGAGLAMATMDIIKHYHGDPANFLDVGGGATAEKVTEAFKIILSDKNVKGIFVNIFGGIMKCDVIAEGVIEATKQVGLELPLVVRLEGTNVELGKKILNESGLNIVAAESMADGAQKIVSLVG</sequence>
<comment type="function">
    <text evidence="1">Succinyl-CoA synthetase functions in the citric acid cycle (TCA), coupling the hydrolysis of succinyl-CoA to the synthesis of either ATP or GTP and thus represents the only step of substrate-level phosphorylation in the TCA. The beta subunit provides nucleotide specificity of the enzyme and binds the substrate succinate, while the binding sites for coenzyme A and phosphate are found in the alpha subunit.</text>
</comment>
<comment type="catalytic activity">
    <reaction evidence="1">
        <text>succinate + ATP + CoA = succinyl-CoA + ADP + phosphate</text>
        <dbReference type="Rhea" id="RHEA:17661"/>
        <dbReference type="ChEBI" id="CHEBI:30031"/>
        <dbReference type="ChEBI" id="CHEBI:30616"/>
        <dbReference type="ChEBI" id="CHEBI:43474"/>
        <dbReference type="ChEBI" id="CHEBI:57287"/>
        <dbReference type="ChEBI" id="CHEBI:57292"/>
        <dbReference type="ChEBI" id="CHEBI:456216"/>
        <dbReference type="EC" id="6.2.1.5"/>
    </reaction>
    <physiologicalReaction direction="right-to-left" evidence="1">
        <dbReference type="Rhea" id="RHEA:17663"/>
    </physiologicalReaction>
</comment>
<comment type="catalytic activity">
    <reaction evidence="1">
        <text>GTP + succinate + CoA = succinyl-CoA + GDP + phosphate</text>
        <dbReference type="Rhea" id="RHEA:22120"/>
        <dbReference type="ChEBI" id="CHEBI:30031"/>
        <dbReference type="ChEBI" id="CHEBI:37565"/>
        <dbReference type="ChEBI" id="CHEBI:43474"/>
        <dbReference type="ChEBI" id="CHEBI:57287"/>
        <dbReference type="ChEBI" id="CHEBI:57292"/>
        <dbReference type="ChEBI" id="CHEBI:58189"/>
    </reaction>
    <physiologicalReaction direction="right-to-left" evidence="1">
        <dbReference type="Rhea" id="RHEA:22122"/>
    </physiologicalReaction>
</comment>
<comment type="cofactor">
    <cofactor evidence="1">
        <name>Mg(2+)</name>
        <dbReference type="ChEBI" id="CHEBI:18420"/>
    </cofactor>
    <text evidence="1">Binds 1 Mg(2+) ion per subunit.</text>
</comment>
<comment type="pathway">
    <text evidence="1">Carbohydrate metabolism; tricarboxylic acid cycle; succinate from succinyl-CoA (ligase route): step 1/1.</text>
</comment>
<comment type="subunit">
    <text evidence="1">Heterotetramer of two alpha and two beta subunits.</text>
</comment>
<comment type="similarity">
    <text evidence="1">Belongs to the succinate/malate CoA ligase beta subunit family.</text>
</comment>
<gene>
    <name evidence="1" type="primary">sucC</name>
    <name type="ordered locus">BALH_3467</name>
</gene>
<feature type="chain" id="PRO_1000082005" description="Succinate--CoA ligase [ADP-forming] subunit beta">
    <location>
        <begin position="1"/>
        <end position="386"/>
    </location>
</feature>
<feature type="domain" description="ATP-grasp" evidence="1">
    <location>
        <begin position="9"/>
        <end position="244"/>
    </location>
</feature>
<feature type="binding site" evidence="1">
    <location>
        <position position="46"/>
    </location>
    <ligand>
        <name>ATP</name>
        <dbReference type="ChEBI" id="CHEBI:30616"/>
    </ligand>
</feature>
<feature type="binding site" evidence="1">
    <location>
        <begin position="53"/>
        <end position="55"/>
    </location>
    <ligand>
        <name>ATP</name>
        <dbReference type="ChEBI" id="CHEBI:30616"/>
    </ligand>
</feature>
<feature type="binding site" evidence="1">
    <location>
        <position position="99"/>
    </location>
    <ligand>
        <name>ATP</name>
        <dbReference type="ChEBI" id="CHEBI:30616"/>
    </ligand>
</feature>
<feature type="binding site" evidence="1">
    <location>
        <position position="102"/>
    </location>
    <ligand>
        <name>ATP</name>
        <dbReference type="ChEBI" id="CHEBI:30616"/>
    </ligand>
</feature>
<feature type="binding site" evidence="1">
    <location>
        <position position="107"/>
    </location>
    <ligand>
        <name>ATP</name>
        <dbReference type="ChEBI" id="CHEBI:30616"/>
    </ligand>
</feature>
<feature type="binding site" evidence="1">
    <location>
        <position position="199"/>
    </location>
    <ligand>
        <name>Mg(2+)</name>
        <dbReference type="ChEBI" id="CHEBI:18420"/>
    </ligand>
</feature>
<feature type="binding site" evidence="1">
    <location>
        <position position="213"/>
    </location>
    <ligand>
        <name>Mg(2+)</name>
        <dbReference type="ChEBI" id="CHEBI:18420"/>
    </ligand>
</feature>
<feature type="binding site" evidence="1">
    <location>
        <position position="264"/>
    </location>
    <ligand>
        <name>substrate</name>
        <note>ligand shared with subunit alpha</note>
    </ligand>
</feature>
<feature type="binding site" evidence="1">
    <location>
        <begin position="321"/>
        <end position="323"/>
    </location>
    <ligand>
        <name>substrate</name>
        <note>ligand shared with subunit alpha</note>
    </ligand>
</feature>
<dbReference type="EC" id="6.2.1.5" evidence="1"/>
<dbReference type="EMBL" id="CP000485">
    <property type="protein sequence ID" value="ABK86702.1"/>
    <property type="molecule type" value="Genomic_DNA"/>
</dbReference>
<dbReference type="RefSeq" id="WP_001020785.1">
    <property type="nucleotide sequence ID" value="NC_008600.1"/>
</dbReference>
<dbReference type="SMR" id="A0RHK9"/>
<dbReference type="GeneID" id="93007276"/>
<dbReference type="KEGG" id="btl:BALH_3467"/>
<dbReference type="HOGENOM" id="CLU_037430_0_2_9"/>
<dbReference type="UniPathway" id="UPA00223">
    <property type="reaction ID" value="UER00999"/>
</dbReference>
<dbReference type="GO" id="GO:0005829">
    <property type="term" value="C:cytosol"/>
    <property type="evidence" value="ECO:0007669"/>
    <property type="project" value="TreeGrafter"/>
</dbReference>
<dbReference type="GO" id="GO:0042709">
    <property type="term" value="C:succinate-CoA ligase complex"/>
    <property type="evidence" value="ECO:0007669"/>
    <property type="project" value="TreeGrafter"/>
</dbReference>
<dbReference type="GO" id="GO:0005524">
    <property type="term" value="F:ATP binding"/>
    <property type="evidence" value="ECO:0007669"/>
    <property type="project" value="UniProtKB-UniRule"/>
</dbReference>
<dbReference type="GO" id="GO:0000287">
    <property type="term" value="F:magnesium ion binding"/>
    <property type="evidence" value="ECO:0007669"/>
    <property type="project" value="UniProtKB-UniRule"/>
</dbReference>
<dbReference type="GO" id="GO:0004775">
    <property type="term" value="F:succinate-CoA ligase (ADP-forming) activity"/>
    <property type="evidence" value="ECO:0007669"/>
    <property type="project" value="UniProtKB-UniRule"/>
</dbReference>
<dbReference type="GO" id="GO:0004776">
    <property type="term" value="F:succinate-CoA ligase (GDP-forming) activity"/>
    <property type="evidence" value="ECO:0007669"/>
    <property type="project" value="RHEA"/>
</dbReference>
<dbReference type="GO" id="GO:0006104">
    <property type="term" value="P:succinyl-CoA metabolic process"/>
    <property type="evidence" value="ECO:0007669"/>
    <property type="project" value="TreeGrafter"/>
</dbReference>
<dbReference type="GO" id="GO:0006099">
    <property type="term" value="P:tricarboxylic acid cycle"/>
    <property type="evidence" value="ECO:0007669"/>
    <property type="project" value="UniProtKB-UniRule"/>
</dbReference>
<dbReference type="FunFam" id="3.30.1490.20:FF:000002">
    <property type="entry name" value="Succinate--CoA ligase [ADP-forming] subunit beta"/>
    <property type="match status" value="1"/>
</dbReference>
<dbReference type="FunFam" id="3.30.470.20:FF:000002">
    <property type="entry name" value="Succinate--CoA ligase [ADP-forming] subunit beta"/>
    <property type="match status" value="1"/>
</dbReference>
<dbReference type="FunFam" id="3.40.50.261:FF:000001">
    <property type="entry name" value="Succinate--CoA ligase [ADP-forming] subunit beta"/>
    <property type="match status" value="1"/>
</dbReference>
<dbReference type="Gene3D" id="3.30.1490.20">
    <property type="entry name" value="ATP-grasp fold, A domain"/>
    <property type="match status" value="1"/>
</dbReference>
<dbReference type="Gene3D" id="3.30.470.20">
    <property type="entry name" value="ATP-grasp fold, B domain"/>
    <property type="match status" value="1"/>
</dbReference>
<dbReference type="Gene3D" id="3.40.50.261">
    <property type="entry name" value="Succinyl-CoA synthetase domains"/>
    <property type="match status" value="1"/>
</dbReference>
<dbReference type="HAMAP" id="MF_00558">
    <property type="entry name" value="Succ_CoA_beta"/>
    <property type="match status" value="1"/>
</dbReference>
<dbReference type="InterPro" id="IPR011761">
    <property type="entry name" value="ATP-grasp"/>
</dbReference>
<dbReference type="InterPro" id="IPR013650">
    <property type="entry name" value="ATP-grasp_succ-CoA_synth-type"/>
</dbReference>
<dbReference type="InterPro" id="IPR013815">
    <property type="entry name" value="ATP_grasp_subdomain_1"/>
</dbReference>
<dbReference type="InterPro" id="IPR005811">
    <property type="entry name" value="SUCC_ACL_C"/>
</dbReference>
<dbReference type="InterPro" id="IPR005809">
    <property type="entry name" value="Succ_CoA_ligase-like_bsu"/>
</dbReference>
<dbReference type="InterPro" id="IPR016102">
    <property type="entry name" value="Succinyl-CoA_synth-like"/>
</dbReference>
<dbReference type="NCBIfam" id="NF001913">
    <property type="entry name" value="PRK00696.1"/>
    <property type="match status" value="1"/>
</dbReference>
<dbReference type="NCBIfam" id="TIGR01016">
    <property type="entry name" value="sucCoAbeta"/>
    <property type="match status" value="1"/>
</dbReference>
<dbReference type="PANTHER" id="PTHR11815:SF10">
    <property type="entry name" value="SUCCINATE--COA LIGASE [GDP-FORMING] SUBUNIT BETA, MITOCHONDRIAL"/>
    <property type="match status" value="1"/>
</dbReference>
<dbReference type="PANTHER" id="PTHR11815">
    <property type="entry name" value="SUCCINYL-COA SYNTHETASE BETA CHAIN"/>
    <property type="match status" value="1"/>
</dbReference>
<dbReference type="Pfam" id="PF08442">
    <property type="entry name" value="ATP-grasp_2"/>
    <property type="match status" value="1"/>
</dbReference>
<dbReference type="Pfam" id="PF00549">
    <property type="entry name" value="Ligase_CoA"/>
    <property type="match status" value="1"/>
</dbReference>
<dbReference type="PIRSF" id="PIRSF001554">
    <property type="entry name" value="SucCS_beta"/>
    <property type="match status" value="1"/>
</dbReference>
<dbReference type="SUPFAM" id="SSF56059">
    <property type="entry name" value="Glutathione synthetase ATP-binding domain-like"/>
    <property type="match status" value="1"/>
</dbReference>
<dbReference type="SUPFAM" id="SSF52210">
    <property type="entry name" value="Succinyl-CoA synthetase domains"/>
    <property type="match status" value="1"/>
</dbReference>
<dbReference type="PROSITE" id="PS50975">
    <property type="entry name" value="ATP_GRASP"/>
    <property type="match status" value="1"/>
</dbReference>
<reference key="1">
    <citation type="journal article" date="2007" name="J. Bacteriol.">
        <title>The complete genome sequence of Bacillus thuringiensis Al Hakam.</title>
        <authorList>
            <person name="Challacombe J.F."/>
            <person name="Altherr M.R."/>
            <person name="Xie G."/>
            <person name="Bhotika S.S."/>
            <person name="Brown N."/>
            <person name="Bruce D."/>
            <person name="Campbell C.S."/>
            <person name="Campbell M.L."/>
            <person name="Chen J."/>
            <person name="Chertkov O."/>
            <person name="Cleland C."/>
            <person name="Dimitrijevic M."/>
            <person name="Doggett N.A."/>
            <person name="Fawcett J.J."/>
            <person name="Glavina T."/>
            <person name="Goodwin L.A."/>
            <person name="Green L.D."/>
            <person name="Han C.S."/>
            <person name="Hill K.K."/>
            <person name="Hitchcock P."/>
            <person name="Jackson P.J."/>
            <person name="Keim P."/>
            <person name="Kewalramani A.R."/>
            <person name="Longmire J."/>
            <person name="Lucas S."/>
            <person name="Malfatti S."/>
            <person name="Martinez D."/>
            <person name="McMurry K."/>
            <person name="Meincke L.J."/>
            <person name="Misra M."/>
            <person name="Moseman B.L."/>
            <person name="Mundt M."/>
            <person name="Munk A.C."/>
            <person name="Okinaka R.T."/>
            <person name="Parson-Quintana B."/>
            <person name="Reilly L.P."/>
            <person name="Richardson P."/>
            <person name="Robinson D.L."/>
            <person name="Saunders E."/>
            <person name="Tapia R."/>
            <person name="Tesmer J.G."/>
            <person name="Thayer N."/>
            <person name="Thompson L.S."/>
            <person name="Tice H."/>
            <person name="Ticknor L.O."/>
            <person name="Wills P.L."/>
            <person name="Gilna P."/>
            <person name="Brettin T.S."/>
        </authorList>
    </citation>
    <scope>NUCLEOTIDE SEQUENCE [LARGE SCALE GENOMIC DNA]</scope>
    <source>
        <strain>Al Hakam</strain>
    </source>
</reference>